<keyword id="KW-0007">Acetylation</keyword>
<keyword id="KW-0687">Ribonucleoprotein</keyword>
<keyword id="KW-0689">Ribosomal protein</keyword>
<keyword id="KW-0694">RNA-binding</keyword>
<keyword id="KW-0699">rRNA-binding</keyword>
<evidence type="ECO:0000255" key="1">
    <source>
        <dbReference type="HAMAP-Rule" id="MF_01365"/>
    </source>
</evidence>
<evidence type="ECO:0000305" key="2"/>
<reference key="1">
    <citation type="journal article" date="2009" name="PLoS Genet.">
        <title>Organised genome dynamics in the Escherichia coli species results in highly diverse adaptive paths.</title>
        <authorList>
            <person name="Touchon M."/>
            <person name="Hoede C."/>
            <person name="Tenaillon O."/>
            <person name="Barbe V."/>
            <person name="Baeriswyl S."/>
            <person name="Bidet P."/>
            <person name="Bingen E."/>
            <person name="Bonacorsi S."/>
            <person name="Bouchier C."/>
            <person name="Bouvet O."/>
            <person name="Calteau A."/>
            <person name="Chiapello H."/>
            <person name="Clermont O."/>
            <person name="Cruveiller S."/>
            <person name="Danchin A."/>
            <person name="Diard M."/>
            <person name="Dossat C."/>
            <person name="Karoui M.E."/>
            <person name="Frapy E."/>
            <person name="Garry L."/>
            <person name="Ghigo J.M."/>
            <person name="Gilles A.M."/>
            <person name="Johnson J."/>
            <person name="Le Bouguenec C."/>
            <person name="Lescat M."/>
            <person name="Mangenot S."/>
            <person name="Martinez-Jehanne V."/>
            <person name="Matic I."/>
            <person name="Nassif X."/>
            <person name="Oztas S."/>
            <person name="Petit M.A."/>
            <person name="Pichon C."/>
            <person name="Rouy Z."/>
            <person name="Ruf C.S."/>
            <person name="Schneider D."/>
            <person name="Tourret J."/>
            <person name="Vacherie B."/>
            <person name="Vallenet D."/>
            <person name="Medigue C."/>
            <person name="Rocha E.P.C."/>
            <person name="Denamur E."/>
        </authorList>
    </citation>
    <scope>NUCLEOTIDE SEQUENCE [LARGE SCALE GENOMIC DNA]</scope>
    <source>
        <strain>ED1a</strain>
    </source>
</reference>
<gene>
    <name evidence="1" type="primary">rplF</name>
    <name type="ordered locus">ECED1_3968</name>
</gene>
<accession>B7N189</accession>
<organism>
    <name type="scientific">Escherichia coli O81 (strain ED1a)</name>
    <dbReference type="NCBI Taxonomy" id="585397"/>
    <lineage>
        <taxon>Bacteria</taxon>
        <taxon>Pseudomonadati</taxon>
        <taxon>Pseudomonadota</taxon>
        <taxon>Gammaproteobacteria</taxon>
        <taxon>Enterobacterales</taxon>
        <taxon>Enterobacteriaceae</taxon>
        <taxon>Escherichia</taxon>
    </lineage>
</organism>
<dbReference type="EMBL" id="CU928162">
    <property type="protein sequence ID" value="CAR10107.2"/>
    <property type="molecule type" value="Genomic_DNA"/>
</dbReference>
<dbReference type="RefSeq" id="WP_000091945.1">
    <property type="nucleotide sequence ID" value="NC_011745.1"/>
</dbReference>
<dbReference type="SMR" id="B7N189"/>
<dbReference type="GeneID" id="86948169"/>
<dbReference type="KEGG" id="ecq:ECED1_3968"/>
<dbReference type="HOGENOM" id="CLU_065464_1_2_6"/>
<dbReference type="Proteomes" id="UP000000748">
    <property type="component" value="Chromosome"/>
</dbReference>
<dbReference type="GO" id="GO:0022625">
    <property type="term" value="C:cytosolic large ribosomal subunit"/>
    <property type="evidence" value="ECO:0007669"/>
    <property type="project" value="TreeGrafter"/>
</dbReference>
<dbReference type="GO" id="GO:0019843">
    <property type="term" value="F:rRNA binding"/>
    <property type="evidence" value="ECO:0007669"/>
    <property type="project" value="UniProtKB-UniRule"/>
</dbReference>
<dbReference type="GO" id="GO:0003735">
    <property type="term" value="F:structural constituent of ribosome"/>
    <property type="evidence" value="ECO:0007669"/>
    <property type="project" value="InterPro"/>
</dbReference>
<dbReference type="GO" id="GO:0002181">
    <property type="term" value="P:cytoplasmic translation"/>
    <property type="evidence" value="ECO:0007669"/>
    <property type="project" value="TreeGrafter"/>
</dbReference>
<dbReference type="FunFam" id="3.90.930.12:FF:000001">
    <property type="entry name" value="50S ribosomal protein L6"/>
    <property type="match status" value="1"/>
</dbReference>
<dbReference type="FunFam" id="3.90.930.12:FF:000002">
    <property type="entry name" value="50S ribosomal protein L6"/>
    <property type="match status" value="1"/>
</dbReference>
<dbReference type="Gene3D" id="3.90.930.12">
    <property type="entry name" value="Ribosomal protein L6, alpha-beta domain"/>
    <property type="match status" value="2"/>
</dbReference>
<dbReference type="HAMAP" id="MF_01365_B">
    <property type="entry name" value="Ribosomal_uL6_B"/>
    <property type="match status" value="1"/>
</dbReference>
<dbReference type="InterPro" id="IPR000702">
    <property type="entry name" value="Ribosomal_uL6-like"/>
</dbReference>
<dbReference type="InterPro" id="IPR036789">
    <property type="entry name" value="Ribosomal_uL6-like_a/b-dom_sf"/>
</dbReference>
<dbReference type="InterPro" id="IPR020040">
    <property type="entry name" value="Ribosomal_uL6_a/b-dom"/>
</dbReference>
<dbReference type="InterPro" id="IPR019906">
    <property type="entry name" value="Ribosomal_uL6_bac-type"/>
</dbReference>
<dbReference type="InterPro" id="IPR002358">
    <property type="entry name" value="Ribosomal_uL6_CS"/>
</dbReference>
<dbReference type="NCBIfam" id="TIGR03654">
    <property type="entry name" value="L6_bact"/>
    <property type="match status" value="1"/>
</dbReference>
<dbReference type="PANTHER" id="PTHR11655">
    <property type="entry name" value="60S/50S RIBOSOMAL PROTEIN L6/L9"/>
    <property type="match status" value="1"/>
</dbReference>
<dbReference type="PANTHER" id="PTHR11655:SF14">
    <property type="entry name" value="LARGE RIBOSOMAL SUBUNIT PROTEIN UL6M"/>
    <property type="match status" value="1"/>
</dbReference>
<dbReference type="Pfam" id="PF00347">
    <property type="entry name" value="Ribosomal_L6"/>
    <property type="match status" value="2"/>
</dbReference>
<dbReference type="PIRSF" id="PIRSF002162">
    <property type="entry name" value="Ribosomal_L6"/>
    <property type="match status" value="1"/>
</dbReference>
<dbReference type="PRINTS" id="PR00059">
    <property type="entry name" value="RIBOSOMALL6"/>
</dbReference>
<dbReference type="SUPFAM" id="SSF56053">
    <property type="entry name" value="Ribosomal protein L6"/>
    <property type="match status" value="2"/>
</dbReference>
<dbReference type="PROSITE" id="PS00525">
    <property type="entry name" value="RIBOSOMAL_L6_1"/>
    <property type="match status" value="1"/>
</dbReference>
<comment type="function">
    <text evidence="1">This protein binds to the 23S rRNA, and is important in its secondary structure. It is located near the subunit interface in the base of the L7/L12 stalk, and near the tRNA binding site of the peptidyltransferase center.</text>
</comment>
<comment type="subunit">
    <text evidence="1">Part of the 50S ribosomal subunit.</text>
</comment>
<comment type="similarity">
    <text evidence="1">Belongs to the universal ribosomal protein uL6 family.</text>
</comment>
<name>RL6_ECO81</name>
<protein>
    <recommendedName>
        <fullName evidence="1">Large ribosomal subunit protein uL6</fullName>
    </recommendedName>
    <alternativeName>
        <fullName evidence="2">50S ribosomal protein L6</fullName>
    </alternativeName>
</protein>
<sequence>MSRVAKAPVVVPAGVDVKINGQVITIKGKNGELTRTLNDAVEVKHADNTLTFGPRDGYADGWAQAGTARALLNSMVIGVTEGFTKKLQLVGVGYRAAVKGNVINLSLGFSHPVDHQLPAGITAECPTQTEIVLKGADKQVIGQVAADLRAYRRPEPYKGKGVRYADEVVRTKEAKKK</sequence>
<feature type="chain" id="PRO_1000166811" description="Large ribosomal subunit protein uL6">
    <location>
        <begin position="1"/>
        <end position="177"/>
    </location>
</feature>
<feature type="modified residue" description="N6-acetyllysine" evidence="1">
    <location>
        <position position="44"/>
    </location>
</feature>
<proteinExistence type="inferred from homology"/>